<proteinExistence type="inferred from homology"/>
<accession>B4JLL3</accession>
<organism>
    <name type="scientific">Drosophila grimshawi</name>
    <name type="common">Hawaiian fruit fly</name>
    <name type="synonym">Idiomyia grimshawi</name>
    <dbReference type="NCBI Taxonomy" id="7222"/>
    <lineage>
        <taxon>Eukaryota</taxon>
        <taxon>Metazoa</taxon>
        <taxon>Ecdysozoa</taxon>
        <taxon>Arthropoda</taxon>
        <taxon>Hexapoda</taxon>
        <taxon>Insecta</taxon>
        <taxon>Pterygota</taxon>
        <taxon>Neoptera</taxon>
        <taxon>Endopterygota</taxon>
        <taxon>Diptera</taxon>
        <taxon>Brachycera</taxon>
        <taxon>Muscomorpha</taxon>
        <taxon>Ephydroidea</taxon>
        <taxon>Drosophilidae</taxon>
        <taxon>Drosophila</taxon>
        <taxon>Hawaiian Drosophila</taxon>
    </lineage>
</organism>
<name>MTNB_DROGR</name>
<sequence length="230" mass="26319">MALSFFKDLPEEHPRHLIPALCRQFYHLGWVTGTGGGMSIKQDNEIYIAPSGVQKERMQPEDLFVQNIDGKDLQLPPEIKGLSKSQCTPLFMLAYRHRNAGAVIHTHSQHAVMATLLWPGKTFRCTHLEMIKGIFDEADERYLRYDEQLIVPIIENTPHERDLADSMYAAMMEYPGCSAVLVRRHGVYVWGKTWEKAKTMSECYDYLFSIAVQMKKAGLNPEKFEKPSLG</sequence>
<gene>
    <name type="ORF">GH11851</name>
</gene>
<keyword id="KW-0028">Amino-acid biosynthesis</keyword>
<keyword id="KW-0963">Cytoplasm</keyword>
<keyword id="KW-0456">Lyase</keyword>
<keyword id="KW-0479">Metal-binding</keyword>
<keyword id="KW-0486">Methionine biosynthesis</keyword>
<keyword id="KW-1185">Reference proteome</keyword>
<keyword id="KW-0862">Zinc</keyword>
<protein>
    <recommendedName>
        <fullName evidence="1">Probable methylthioribulose-1-phosphate dehydratase</fullName>
        <shortName evidence="1">MTRu-1-P dehydratase</shortName>
        <ecNumber evidence="1">4.2.1.109</ecNumber>
    </recommendedName>
</protein>
<reference key="1">
    <citation type="journal article" date="2007" name="Nature">
        <title>Evolution of genes and genomes on the Drosophila phylogeny.</title>
        <authorList>
            <consortium name="Drosophila 12 genomes consortium"/>
        </authorList>
    </citation>
    <scope>NUCLEOTIDE SEQUENCE [LARGE SCALE GENOMIC DNA]</scope>
    <source>
        <strain>Tucson 15287-2541.00</strain>
    </source>
</reference>
<feature type="chain" id="PRO_0000393782" description="Probable methylthioribulose-1-phosphate dehydratase">
    <location>
        <begin position="1"/>
        <end position="230"/>
    </location>
</feature>
<feature type="active site" description="Proton donor/acceptor" evidence="1">
    <location>
        <position position="129"/>
    </location>
</feature>
<feature type="binding site" evidence="1">
    <location>
        <position position="87"/>
    </location>
    <ligand>
        <name>substrate</name>
    </ligand>
</feature>
<feature type="binding site" evidence="1">
    <location>
        <position position="105"/>
    </location>
    <ligand>
        <name>Zn(2+)</name>
        <dbReference type="ChEBI" id="CHEBI:29105"/>
    </ligand>
</feature>
<feature type="binding site" evidence="1">
    <location>
        <position position="107"/>
    </location>
    <ligand>
        <name>Zn(2+)</name>
        <dbReference type="ChEBI" id="CHEBI:29105"/>
    </ligand>
</feature>
<feature type="binding site" evidence="1">
    <location>
        <position position="185"/>
    </location>
    <ligand>
        <name>Zn(2+)</name>
        <dbReference type="ChEBI" id="CHEBI:29105"/>
    </ligand>
</feature>
<comment type="function">
    <text evidence="1">Catalyzes the dehydration of methylthioribulose-1-phosphate (MTRu-1-P) into 2,3-diketo-5-methylthiopentyl-1-phosphate (DK-MTP-1-P).</text>
</comment>
<comment type="catalytic activity">
    <reaction evidence="1">
        <text>5-(methylsulfanyl)-D-ribulose 1-phosphate = 5-methylsulfanyl-2,3-dioxopentyl phosphate + H2O</text>
        <dbReference type="Rhea" id="RHEA:15549"/>
        <dbReference type="ChEBI" id="CHEBI:15377"/>
        <dbReference type="ChEBI" id="CHEBI:58548"/>
        <dbReference type="ChEBI" id="CHEBI:58828"/>
        <dbReference type="EC" id="4.2.1.109"/>
    </reaction>
</comment>
<comment type="cofactor">
    <cofactor evidence="1">
        <name>Zn(2+)</name>
        <dbReference type="ChEBI" id="CHEBI:29105"/>
    </cofactor>
    <text evidence="1">Binds 1 zinc ion per subunit.</text>
</comment>
<comment type="pathway">
    <text evidence="1">Amino-acid biosynthesis; L-methionine biosynthesis via salvage pathway; L-methionine from S-methyl-5-thio-alpha-D-ribose 1-phosphate: step 2/6.</text>
</comment>
<comment type="subcellular location">
    <subcellularLocation>
        <location evidence="1">Cytoplasm</location>
    </subcellularLocation>
</comment>
<comment type="similarity">
    <text evidence="1">Belongs to the aldolase class II family. MtnB subfamily.</text>
</comment>
<dbReference type="EC" id="4.2.1.109" evidence="1"/>
<dbReference type="EMBL" id="CH916370">
    <property type="protein sequence ID" value="EDW00466.1"/>
    <property type="molecule type" value="Genomic_DNA"/>
</dbReference>
<dbReference type="SMR" id="B4JLL3"/>
<dbReference type="FunCoup" id="B4JLL3">
    <property type="interactions" value="924"/>
</dbReference>
<dbReference type="STRING" id="7222.B4JLL3"/>
<dbReference type="EnsemblMetazoa" id="FBtr0147265">
    <property type="protein sequence ID" value="FBpp0145757"/>
    <property type="gene ID" value="FBgn0119330"/>
</dbReference>
<dbReference type="EnsemblMetazoa" id="XM_001991805.3">
    <property type="protein sequence ID" value="XP_001991841.1"/>
    <property type="gene ID" value="LOC6564975"/>
</dbReference>
<dbReference type="GeneID" id="6564975"/>
<dbReference type="KEGG" id="dgr:6564975"/>
<dbReference type="eggNOG" id="KOG2631">
    <property type="taxonomic scope" value="Eukaryota"/>
</dbReference>
<dbReference type="HOGENOM" id="CLU_006033_4_0_1"/>
<dbReference type="InParanoid" id="B4JLL3"/>
<dbReference type="OMA" id="WFPGTSG"/>
<dbReference type="OrthoDB" id="191080at2759"/>
<dbReference type="PhylomeDB" id="B4JLL3"/>
<dbReference type="UniPathway" id="UPA00904">
    <property type="reaction ID" value="UER00875"/>
</dbReference>
<dbReference type="Proteomes" id="UP000001070">
    <property type="component" value="Unassembled WGS sequence"/>
</dbReference>
<dbReference type="GO" id="GO:0005737">
    <property type="term" value="C:cytoplasm"/>
    <property type="evidence" value="ECO:0007669"/>
    <property type="project" value="UniProtKB-SubCell"/>
</dbReference>
<dbReference type="GO" id="GO:0046570">
    <property type="term" value="F:methylthioribulose 1-phosphate dehydratase activity"/>
    <property type="evidence" value="ECO:0000250"/>
    <property type="project" value="UniProtKB"/>
</dbReference>
<dbReference type="GO" id="GO:0008270">
    <property type="term" value="F:zinc ion binding"/>
    <property type="evidence" value="ECO:0000250"/>
    <property type="project" value="UniProtKB"/>
</dbReference>
<dbReference type="GO" id="GO:0019509">
    <property type="term" value="P:L-methionine salvage from methylthioadenosine"/>
    <property type="evidence" value="ECO:0007669"/>
    <property type="project" value="UniProtKB-UniRule"/>
</dbReference>
<dbReference type="FunFam" id="3.40.225.10:FF:000003">
    <property type="entry name" value="Methylthioribulose-1-phosphate dehydratase"/>
    <property type="match status" value="1"/>
</dbReference>
<dbReference type="Gene3D" id="3.40.225.10">
    <property type="entry name" value="Class II aldolase/adducin N-terminal domain"/>
    <property type="match status" value="1"/>
</dbReference>
<dbReference type="HAMAP" id="MF_03116">
    <property type="entry name" value="Salvage_MtnB_euk"/>
    <property type="match status" value="1"/>
</dbReference>
<dbReference type="InterPro" id="IPR001303">
    <property type="entry name" value="Aldolase_II/adducin_N"/>
</dbReference>
<dbReference type="InterPro" id="IPR036409">
    <property type="entry name" value="Aldolase_II/adducin_N_sf"/>
</dbReference>
<dbReference type="InterPro" id="IPR017714">
    <property type="entry name" value="MethylthioRu-1-P_deHdtase_MtnB"/>
</dbReference>
<dbReference type="InterPro" id="IPR027514">
    <property type="entry name" value="Salvage_MtnB_euk"/>
</dbReference>
<dbReference type="NCBIfam" id="TIGR03328">
    <property type="entry name" value="salvage_mtnB"/>
    <property type="match status" value="1"/>
</dbReference>
<dbReference type="PANTHER" id="PTHR10640">
    <property type="entry name" value="METHYLTHIORIBULOSE-1-PHOSPHATE DEHYDRATASE"/>
    <property type="match status" value="1"/>
</dbReference>
<dbReference type="PANTHER" id="PTHR10640:SF7">
    <property type="entry name" value="METHYLTHIORIBULOSE-1-PHOSPHATE DEHYDRATASE"/>
    <property type="match status" value="1"/>
</dbReference>
<dbReference type="Pfam" id="PF00596">
    <property type="entry name" value="Aldolase_II"/>
    <property type="match status" value="1"/>
</dbReference>
<dbReference type="SMART" id="SM01007">
    <property type="entry name" value="Aldolase_II"/>
    <property type="match status" value="1"/>
</dbReference>
<dbReference type="SUPFAM" id="SSF53639">
    <property type="entry name" value="AraD/HMP-PK domain-like"/>
    <property type="match status" value="1"/>
</dbReference>
<evidence type="ECO:0000255" key="1">
    <source>
        <dbReference type="HAMAP-Rule" id="MF_03116"/>
    </source>
</evidence>